<accession>P0A9A0</accession>
<accession>P23887</accession>
<name>FTNA_ECO57</name>
<evidence type="ECO:0000250" key="1"/>
<evidence type="ECO:0000255" key="2">
    <source>
        <dbReference type="PROSITE-ProRule" id="PRU00085"/>
    </source>
</evidence>
<evidence type="ECO:0000305" key="3"/>
<reference key="1">
    <citation type="journal article" date="2001" name="Nature">
        <title>Genome sequence of enterohaemorrhagic Escherichia coli O157:H7.</title>
        <authorList>
            <person name="Perna N.T."/>
            <person name="Plunkett G. III"/>
            <person name="Burland V."/>
            <person name="Mau B."/>
            <person name="Glasner J.D."/>
            <person name="Rose D.J."/>
            <person name="Mayhew G.F."/>
            <person name="Evans P.S."/>
            <person name="Gregor J."/>
            <person name="Kirkpatrick H.A."/>
            <person name="Posfai G."/>
            <person name="Hackett J."/>
            <person name="Klink S."/>
            <person name="Boutin A."/>
            <person name="Shao Y."/>
            <person name="Miller L."/>
            <person name="Grotbeck E.J."/>
            <person name="Davis N.W."/>
            <person name="Lim A."/>
            <person name="Dimalanta E.T."/>
            <person name="Potamousis K."/>
            <person name="Apodaca J."/>
            <person name="Anantharaman T.S."/>
            <person name="Lin J."/>
            <person name="Yen G."/>
            <person name="Schwartz D.C."/>
            <person name="Welch R.A."/>
            <person name="Blattner F.R."/>
        </authorList>
    </citation>
    <scope>NUCLEOTIDE SEQUENCE [LARGE SCALE GENOMIC DNA]</scope>
    <source>
        <strain>O157:H7 / EDL933 / ATCC 700927 / EHEC</strain>
    </source>
</reference>
<reference key="2">
    <citation type="journal article" date="2001" name="DNA Res.">
        <title>Complete genome sequence of enterohemorrhagic Escherichia coli O157:H7 and genomic comparison with a laboratory strain K-12.</title>
        <authorList>
            <person name="Hayashi T."/>
            <person name="Makino K."/>
            <person name="Ohnishi M."/>
            <person name="Kurokawa K."/>
            <person name="Ishii K."/>
            <person name="Yokoyama K."/>
            <person name="Han C.-G."/>
            <person name="Ohtsubo E."/>
            <person name="Nakayama K."/>
            <person name="Murata T."/>
            <person name="Tanaka M."/>
            <person name="Tobe T."/>
            <person name="Iida T."/>
            <person name="Takami H."/>
            <person name="Honda T."/>
            <person name="Sasakawa C."/>
            <person name="Ogasawara N."/>
            <person name="Yasunaga T."/>
            <person name="Kuhara S."/>
            <person name="Shiba T."/>
            <person name="Hattori M."/>
            <person name="Shinagawa H."/>
        </authorList>
    </citation>
    <scope>NUCLEOTIDE SEQUENCE [LARGE SCALE GENOMIC DNA]</scope>
    <source>
        <strain>O157:H7 / Sakai / RIMD 0509952 / EHEC</strain>
    </source>
</reference>
<gene>
    <name type="primary">ftnA</name>
    <name type="ordered locus">Z2960</name>
    <name type="ordered locus">ECs2613</name>
</gene>
<proteinExistence type="inferred from homology"/>
<comment type="function">
    <text evidence="1">Iron-storage protein.</text>
</comment>
<comment type="catalytic activity">
    <reaction>
        <text>4 Fe(2+) + O2 + 6 H2O = 4 iron(III) oxide-hydroxide + 12 H(+)</text>
        <dbReference type="Rhea" id="RHEA:11972"/>
        <dbReference type="ChEBI" id="CHEBI:15377"/>
        <dbReference type="ChEBI" id="CHEBI:15378"/>
        <dbReference type="ChEBI" id="CHEBI:15379"/>
        <dbReference type="ChEBI" id="CHEBI:29033"/>
        <dbReference type="ChEBI" id="CHEBI:78619"/>
        <dbReference type="EC" id="1.16.3.2"/>
    </reaction>
</comment>
<comment type="subunit">
    <text evidence="1">Homooligomer of 24 subunits that assemble into a spherical protein shell (12 +/- 1 nM diameter) that can sequester at least 2000 iron atoms.</text>
</comment>
<comment type="subcellular location">
    <subcellularLocation>
        <location evidence="1">Cytoplasm</location>
    </subcellularLocation>
</comment>
<comment type="similarity">
    <text evidence="3">Belongs to the ferritin family. Prokaryotic subfamily.</text>
</comment>
<protein>
    <recommendedName>
        <fullName>Bacterial non-heme ferritin</fullName>
        <ecNumber>1.16.3.2</ecNumber>
    </recommendedName>
    <alternativeName>
        <fullName>Ferritin-1</fullName>
    </alternativeName>
</protein>
<sequence>MLKPEMIEKLNEQMNLELYSSLLYQQMSAWCSYHTFEGAAAFLRRHAQEEMTHMQRLFDYLTDTGNLPRINTVESPFAEYSSLDELFQETYKHEQLITQKINELAHAAMTNQDYPTFNFLQWYVSEQHEEEKLFKSIIDKLSLAGKSGEGLYFIDKELSTLDTQN</sequence>
<feature type="chain" id="PRO_0000201086" description="Bacterial non-heme ferritin">
    <location>
        <begin position="1"/>
        <end position="165"/>
    </location>
</feature>
<feature type="domain" description="Ferritin-like diiron" evidence="2">
    <location>
        <begin position="1"/>
        <end position="145"/>
    </location>
</feature>
<feature type="binding site" evidence="2">
    <location>
        <position position="17"/>
    </location>
    <ligand>
        <name>Fe cation</name>
        <dbReference type="ChEBI" id="CHEBI:24875"/>
        <label>1</label>
    </ligand>
</feature>
<feature type="binding site" evidence="2">
    <location>
        <position position="49"/>
    </location>
    <ligand>
        <name>Fe cation</name>
        <dbReference type="ChEBI" id="CHEBI:24875"/>
        <label>3</label>
    </ligand>
</feature>
<feature type="binding site" evidence="2">
    <location>
        <position position="50"/>
    </location>
    <ligand>
        <name>Fe cation</name>
        <dbReference type="ChEBI" id="CHEBI:24875"/>
        <label>1</label>
    </ligand>
</feature>
<feature type="binding site" evidence="2">
    <location>
        <position position="50"/>
    </location>
    <ligand>
        <name>Fe cation</name>
        <dbReference type="ChEBI" id="CHEBI:24875"/>
        <label>2</label>
    </ligand>
</feature>
<feature type="binding site" evidence="2">
    <location>
        <position position="53"/>
    </location>
    <ligand>
        <name>Fe cation</name>
        <dbReference type="ChEBI" id="CHEBI:24875"/>
        <label>1</label>
    </ligand>
</feature>
<feature type="binding site" evidence="2">
    <location>
        <position position="94"/>
    </location>
    <ligand>
        <name>Fe cation</name>
        <dbReference type="ChEBI" id="CHEBI:24875"/>
        <label>2</label>
    </ligand>
</feature>
<feature type="binding site" evidence="2">
    <location>
        <position position="126"/>
    </location>
    <ligand>
        <name>Fe cation</name>
        <dbReference type="ChEBI" id="CHEBI:24875"/>
        <label>3</label>
    </ligand>
</feature>
<feature type="binding site" evidence="2">
    <location>
        <position position="127"/>
    </location>
    <ligand>
        <name>Fe cation</name>
        <dbReference type="ChEBI" id="CHEBI:24875"/>
        <label>2</label>
    </ligand>
</feature>
<feature type="binding site" evidence="2">
    <location>
        <position position="130"/>
    </location>
    <ligand>
        <name>Fe cation</name>
        <dbReference type="ChEBI" id="CHEBI:24875"/>
        <label>2</label>
    </ligand>
</feature>
<feature type="binding site" evidence="2">
    <location>
        <position position="130"/>
    </location>
    <ligand>
        <name>Fe cation</name>
        <dbReference type="ChEBI" id="CHEBI:24875"/>
        <label>3</label>
    </ligand>
</feature>
<keyword id="KW-0963">Cytoplasm</keyword>
<keyword id="KW-0408">Iron</keyword>
<keyword id="KW-0409">Iron storage</keyword>
<keyword id="KW-0479">Metal-binding</keyword>
<keyword id="KW-0560">Oxidoreductase</keyword>
<keyword id="KW-1185">Reference proteome</keyword>
<dbReference type="EC" id="1.16.3.2"/>
<dbReference type="EMBL" id="AE005174">
    <property type="protein sequence ID" value="AAG56894.1"/>
    <property type="molecule type" value="Genomic_DNA"/>
</dbReference>
<dbReference type="EMBL" id="BA000007">
    <property type="protein sequence ID" value="BAB36036.1"/>
    <property type="molecule type" value="Genomic_DNA"/>
</dbReference>
<dbReference type="PIR" id="B85804">
    <property type="entry name" value="B85804"/>
</dbReference>
<dbReference type="PIR" id="E90955">
    <property type="entry name" value="E90955"/>
</dbReference>
<dbReference type="RefSeq" id="NP_310640.1">
    <property type="nucleotide sequence ID" value="NC_002695.1"/>
</dbReference>
<dbReference type="RefSeq" id="WP_000917208.1">
    <property type="nucleotide sequence ID" value="NZ_VOAI01000010.1"/>
</dbReference>
<dbReference type="SMR" id="P0A9A0"/>
<dbReference type="STRING" id="155864.Z2960"/>
<dbReference type="GeneID" id="913633"/>
<dbReference type="GeneID" id="93776210"/>
<dbReference type="KEGG" id="ece:Z2960"/>
<dbReference type="KEGG" id="ecs:ECs_2613"/>
<dbReference type="PATRIC" id="fig|386585.9.peg.2741"/>
<dbReference type="eggNOG" id="COG1528">
    <property type="taxonomic scope" value="Bacteria"/>
</dbReference>
<dbReference type="HOGENOM" id="CLU_065681_1_0_6"/>
<dbReference type="OMA" id="CEDKGFE"/>
<dbReference type="Proteomes" id="UP000000558">
    <property type="component" value="Chromosome"/>
</dbReference>
<dbReference type="Proteomes" id="UP000002519">
    <property type="component" value="Chromosome"/>
</dbReference>
<dbReference type="GO" id="GO:0005829">
    <property type="term" value="C:cytosol"/>
    <property type="evidence" value="ECO:0007669"/>
    <property type="project" value="TreeGrafter"/>
</dbReference>
<dbReference type="GO" id="GO:0008199">
    <property type="term" value="F:ferric iron binding"/>
    <property type="evidence" value="ECO:0007669"/>
    <property type="project" value="InterPro"/>
</dbReference>
<dbReference type="GO" id="GO:0008198">
    <property type="term" value="F:ferrous iron binding"/>
    <property type="evidence" value="ECO:0007669"/>
    <property type="project" value="TreeGrafter"/>
</dbReference>
<dbReference type="GO" id="GO:0004322">
    <property type="term" value="F:ferroxidase activity"/>
    <property type="evidence" value="ECO:0007669"/>
    <property type="project" value="TreeGrafter"/>
</dbReference>
<dbReference type="GO" id="GO:0006879">
    <property type="term" value="P:intracellular iron ion homeostasis"/>
    <property type="evidence" value="ECO:0007669"/>
    <property type="project" value="UniProtKB-KW"/>
</dbReference>
<dbReference type="GO" id="GO:0006826">
    <property type="term" value="P:iron ion transport"/>
    <property type="evidence" value="ECO:0007669"/>
    <property type="project" value="InterPro"/>
</dbReference>
<dbReference type="CDD" id="cd01055">
    <property type="entry name" value="Nonheme_Ferritin"/>
    <property type="match status" value="1"/>
</dbReference>
<dbReference type="FunFam" id="1.20.1260.10:FF:000001">
    <property type="entry name" value="Non-heme ferritin"/>
    <property type="match status" value="1"/>
</dbReference>
<dbReference type="Gene3D" id="1.20.1260.10">
    <property type="match status" value="1"/>
</dbReference>
<dbReference type="InterPro" id="IPR001519">
    <property type="entry name" value="Ferritin"/>
</dbReference>
<dbReference type="InterPro" id="IPR012347">
    <property type="entry name" value="Ferritin-like"/>
</dbReference>
<dbReference type="InterPro" id="IPR009040">
    <property type="entry name" value="Ferritin-like_diiron"/>
</dbReference>
<dbReference type="InterPro" id="IPR009078">
    <property type="entry name" value="Ferritin-like_SF"/>
</dbReference>
<dbReference type="InterPro" id="IPR008331">
    <property type="entry name" value="Ferritin_DPS_dom"/>
</dbReference>
<dbReference type="InterPro" id="IPR041719">
    <property type="entry name" value="Ferritin_prok"/>
</dbReference>
<dbReference type="NCBIfam" id="NF007638">
    <property type="entry name" value="PRK10304.1"/>
    <property type="match status" value="1"/>
</dbReference>
<dbReference type="PANTHER" id="PTHR11431:SF127">
    <property type="entry name" value="BACTERIAL NON-HEME FERRITIN"/>
    <property type="match status" value="1"/>
</dbReference>
<dbReference type="PANTHER" id="PTHR11431">
    <property type="entry name" value="FERRITIN"/>
    <property type="match status" value="1"/>
</dbReference>
<dbReference type="Pfam" id="PF00210">
    <property type="entry name" value="Ferritin"/>
    <property type="match status" value="1"/>
</dbReference>
<dbReference type="SUPFAM" id="SSF47240">
    <property type="entry name" value="Ferritin-like"/>
    <property type="match status" value="1"/>
</dbReference>
<dbReference type="PROSITE" id="PS50905">
    <property type="entry name" value="FERRITIN_LIKE"/>
    <property type="match status" value="1"/>
</dbReference>
<organism>
    <name type="scientific">Escherichia coli O157:H7</name>
    <dbReference type="NCBI Taxonomy" id="83334"/>
    <lineage>
        <taxon>Bacteria</taxon>
        <taxon>Pseudomonadati</taxon>
        <taxon>Pseudomonadota</taxon>
        <taxon>Gammaproteobacteria</taxon>
        <taxon>Enterobacterales</taxon>
        <taxon>Enterobacteriaceae</taxon>
        <taxon>Escherichia</taxon>
    </lineage>
</organism>